<organism>
    <name type="scientific">Chlorobium phaeobacteroides (strain DSM 266 / SMG 266 / 2430)</name>
    <dbReference type="NCBI Taxonomy" id="290317"/>
    <lineage>
        <taxon>Bacteria</taxon>
        <taxon>Pseudomonadati</taxon>
        <taxon>Chlorobiota</taxon>
        <taxon>Chlorobiia</taxon>
        <taxon>Chlorobiales</taxon>
        <taxon>Chlorobiaceae</taxon>
        <taxon>Chlorobium/Pelodictyon group</taxon>
        <taxon>Chlorobium</taxon>
    </lineage>
</organism>
<protein>
    <recommendedName>
        <fullName evidence="1">Ribosome-recycling factor</fullName>
        <shortName evidence="1">RRF</shortName>
    </recommendedName>
    <alternativeName>
        <fullName evidence="1">Ribosome-releasing factor</fullName>
    </alternativeName>
</protein>
<keyword id="KW-0963">Cytoplasm</keyword>
<keyword id="KW-0648">Protein biosynthesis</keyword>
<keyword id="KW-1185">Reference proteome</keyword>
<name>RRF_CHLPD</name>
<sequence length="186" mass="21296">MNVRDVAQRTEPKMKKTIEAFQHEIASIRTGKATTALLDRVKVEAYGQQMPLKQVGNVGVMDVHTLMVQVWDKSMVSATERAIRDANLGLNPAADGQSIRVSIPPLTEERRKEFVKLTKKFGEDSKVSLRNLRRDMIHEIEKLEKEKAISEDDKNKGKKEADEMLHKFEKQLNDLIVLKEKEIMEV</sequence>
<feature type="chain" id="PRO_1000003137" description="Ribosome-recycling factor">
    <location>
        <begin position="1"/>
        <end position="186"/>
    </location>
</feature>
<comment type="function">
    <text evidence="1">Responsible for the release of ribosomes from messenger RNA at the termination of protein biosynthesis. May increase the efficiency of translation by recycling ribosomes from one round of translation to another.</text>
</comment>
<comment type="subcellular location">
    <subcellularLocation>
        <location evidence="1">Cytoplasm</location>
    </subcellularLocation>
</comment>
<comment type="similarity">
    <text evidence="1">Belongs to the RRF family.</text>
</comment>
<dbReference type="EMBL" id="CP000492">
    <property type="protein sequence ID" value="ABL66086.1"/>
    <property type="molecule type" value="Genomic_DNA"/>
</dbReference>
<dbReference type="RefSeq" id="WP_011745888.1">
    <property type="nucleotide sequence ID" value="NC_008639.1"/>
</dbReference>
<dbReference type="SMR" id="A1BI59"/>
<dbReference type="STRING" id="290317.Cpha266_2074"/>
<dbReference type="KEGG" id="cph:Cpha266_2074"/>
<dbReference type="eggNOG" id="COG0233">
    <property type="taxonomic scope" value="Bacteria"/>
</dbReference>
<dbReference type="HOGENOM" id="CLU_073981_2_0_10"/>
<dbReference type="OrthoDB" id="9804006at2"/>
<dbReference type="Proteomes" id="UP000008701">
    <property type="component" value="Chromosome"/>
</dbReference>
<dbReference type="GO" id="GO:0005737">
    <property type="term" value="C:cytoplasm"/>
    <property type="evidence" value="ECO:0007669"/>
    <property type="project" value="UniProtKB-SubCell"/>
</dbReference>
<dbReference type="GO" id="GO:0043023">
    <property type="term" value="F:ribosomal large subunit binding"/>
    <property type="evidence" value="ECO:0007669"/>
    <property type="project" value="TreeGrafter"/>
</dbReference>
<dbReference type="GO" id="GO:0006415">
    <property type="term" value="P:translational termination"/>
    <property type="evidence" value="ECO:0007669"/>
    <property type="project" value="UniProtKB-UniRule"/>
</dbReference>
<dbReference type="CDD" id="cd00520">
    <property type="entry name" value="RRF"/>
    <property type="match status" value="1"/>
</dbReference>
<dbReference type="FunFam" id="3.30.1360.40:FF:000001">
    <property type="entry name" value="Ribosome-recycling factor"/>
    <property type="match status" value="1"/>
</dbReference>
<dbReference type="Gene3D" id="3.30.1360.40">
    <property type="match status" value="1"/>
</dbReference>
<dbReference type="Gene3D" id="1.10.132.20">
    <property type="entry name" value="Ribosome-recycling factor"/>
    <property type="match status" value="1"/>
</dbReference>
<dbReference type="HAMAP" id="MF_00040">
    <property type="entry name" value="RRF"/>
    <property type="match status" value="1"/>
</dbReference>
<dbReference type="InterPro" id="IPR002661">
    <property type="entry name" value="Ribosome_recyc_fac"/>
</dbReference>
<dbReference type="InterPro" id="IPR023584">
    <property type="entry name" value="Ribosome_recyc_fac_dom"/>
</dbReference>
<dbReference type="InterPro" id="IPR036191">
    <property type="entry name" value="RRF_sf"/>
</dbReference>
<dbReference type="NCBIfam" id="TIGR00496">
    <property type="entry name" value="frr"/>
    <property type="match status" value="1"/>
</dbReference>
<dbReference type="PANTHER" id="PTHR20982:SF3">
    <property type="entry name" value="MITOCHONDRIAL RIBOSOME RECYCLING FACTOR PSEUDO 1"/>
    <property type="match status" value="1"/>
</dbReference>
<dbReference type="PANTHER" id="PTHR20982">
    <property type="entry name" value="RIBOSOME RECYCLING FACTOR"/>
    <property type="match status" value="1"/>
</dbReference>
<dbReference type="Pfam" id="PF01765">
    <property type="entry name" value="RRF"/>
    <property type="match status" value="1"/>
</dbReference>
<dbReference type="SUPFAM" id="SSF55194">
    <property type="entry name" value="Ribosome recycling factor, RRF"/>
    <property type="match status" value="1"/>
</dbReference>
<accession>A1BI59</accession>
<evidence type="ECO:0000255" key="1">
    <source>
        <dbReference type="HAMAP-Rule" id="MF_00040"/>
    </source>
</evidence>
<reference key="1">
    <citation type="submission" date="2006-12" db="EMBL/GenBank/DDBJ databases">
        <title>Complete sequence of Chlorobium phaeobacteroides DSM 266.</title>
        <authorList>
            <consortium name="US DOE Joint Genome Institute"/>
            <person name="Copeland A."/>
            <person name="Lucas S."/>
            <person name="Lapidus A."/>
            <person name="Barry K."/>
            <person name="Detter J.C."/>
            <person name="Glavina del Rio T."/>
            <person name="Hammon N."/>
            <person name="Israni S."/>
            <person name="Pitluck S."/>
            <person name="Goltsman E."/>
            <person name="Schmutz J."/>
            <person name="Larimer F."/>
            <person name="Land M."/>
            <person name="Hauser L."/>
            <person name="Mikhailova N."/>
            <person name="Li T."/>
            <person name="Overmann J."/>
            <person name="Bryant D.A."/>
            <person name="Richardson P."/>
        </authorList>
    </citation>
    <scope>NUCLEOTIDE SEQUENCE [LARGE SCALE GENOMIC DNA]</scope>
    <source>
        <strain>DSM 266 / SMG 266 / 2430</strain>
    </source>
</reference>
<gene>
    <name evidence="1" type="primary">frr</name>
    <name type="ordered locus">Cpha266_2074</name>
</gene>
<proteinExistence type="inferred from homology"/>